<sequence length="174" mass="19073">MARLLRALRGLPWLEAPGRARGCAGSGRGDTGSLIKSKLSLSKADWQKKLTPEQFYVTREKGTEAPFSGMYLKNKETGMYHCVCCDSPLFSSEKKYCSGTGWPSFSEAHGTKGSDESHTGILRRLDTSLGCPRMEVVCKQCEAHLGHVFPDGPDPTGQRFCINSVALKFKPSKP</sequence>
<proteinExistence type="evidence at transcript level"/>
<feature type="transit peptide" description="Mitochondrion" evidence="4">
    <location>
        <begin position="1"/>
        <end position="61"/>
    </location>
</feature>
<feature type="chain" id="PRO_0000327244" description="Methionine-R-sulfoxide reductase B2, mitochondrial">
    <location>
        <begin position="62"/>
        <end position="174"/>
    </location>
</feature>
<feature type="domain" description="MsrB" evidence="5">
    <location>
        <begin position="62"/>
        <end position="172"/>
    </location>
</feature>
<feature type="active site" description="Nucleophile" evidence="5">
    <location>
        <position position="161"/>
    </location>
</feature>
<feature type="binding site" evidence="5">
    <location>
        <position position="82"/>
    </location>
    <ligand>
        <name>Zn(2+)</name>
        <dbReference type="ChEBI" id="CHEBI:29105"/>
    </ligand>
</feature>
<feature type="binding site" evidence="5">
    <location>
        <position position="85"/>
    </location>
    <ligand>
        <name>Zn(2+)</name>
        <dbReference type="ChEBI" id="CHEBI:29105"/>
    </ligand>
</feature>
<feature type="binding site" evidence="5">
    <location>
        <position position="138"/>
    </location>
    <ligand>
        <name>Zn(2+)</name>
        <dbReference type="ChEBI" id="CHEBI:29105"/>
    </ligand>
</feature>
<feature type="binding site" evidence="5">
    <location>
        <position position="141"/>
    </location>
    <ligand>
        <name>Zn(2+)</name>
        <dbReference type="ChEBI" id="CHEBI:29105"/>
    </ligand>
</feature>
<protein>
    <recommendedName>
        <fullName>Methionine-R-sulfoxide reductase B2, mitochondrial</fullName>
        <shortName>MsrB2</shortName>
        <ecNumber evidence="2">1.8.4.12</ecNumber>
        <ecNumber evidence="2">1.8.4.14</ecNumber>
    </recommendedName>
</protein>
<gene>
    <name type="primary">Msrb2</name>
</gene>
<reference key="1">
    <citation type="journal article" date="2004" name="Genome Res.">
        <title>The status, quality, and expansion of the NIH full-length cDNA project: the Mammalian Gene Collection (MGC).</title>
        <authorList>
            <consortium name="The MGC Project Team"/>
        </authorList>
    </citation>
    <scope>NUCLEOTIDE SEQUENCE [LARGE SCALE MRNA]</scope>
    <source>
        <tissue>Spleen</tissue>
    </source>
</reference>
<accession>Q4FZX5</accession>
<evidence type="ECO:0000250" key="1"/>
<evidence type="ECO:0000250" key="2">
    <source>
        <dbReference type="UniProtKB" id="Q9JLC3"/>
    </source>
</evidence>
<evidence type="ECO:0000250" key="3">
    <source>
        <dbReference type="UniProtKB" id="Q9Y3D2"/>
    </source>
</evidence>
<evidence type="ECO:0000255" key="4"/>
<evidence type="ECO:0000255" key="5">
    <source>
        <dbReference type="PROSITE-ProRule" id="PRU01126"/>
    </source>
</evidence>
<evidence type="ECO:0000305" key="6"/>
<dbReference type="EC" id="1.8.4.12" evidence="2"/>
<dbReference type="EC" id="1.8.4.14" evidence="2"/>
<dbReference type="EMBL" id="BC098953">
    <property type="protein sequence ID" value="AAH98953.1"/>
    <property type="molecule type" value="mRNA"/>
</dbReference>
<dbReference type="RefSeq" id="NP_001026830.1">
    <property type="nucleotide sequence ID" value="NM_001031660.2"/>
</dbReference>
<dbReference type="BMRB" id="Q4FZX5"/>
<dbReference type="SMR" id="Q4FZX5"/>
<dbReference type="FunCoup" id="Q4FZX5">
    <property type="interactions" value="121"/>
</dbReference>
<dbReference type="STRING" id="10116.ENSRNOP00000022661"/>
<dbReference type="PhosphoSitePlus" id="Q4FZX5"/>
<dbReference type="PaxDb" id="10116-ENSRNOP00000022661"/>
<dbReference type="Ensembl" id="ENSRNOT00000022661.7">
    <property type="protein sequence ID" value="ENSRNOP00000022661.4"/>
    <property type="gene ID" value="ENSRNOG00000016873.7"/>
</dbReference>
<dbReference type="GeneID" id="361286"/>
<dbReference type="KEGG" id="rno:361286"/>
<dbReference type="UCSC" id="RGD:1306026">
    <property type="organism name" value="rat"/>
</dbReference>
<dbReference type="AGR" id="RGD:1306026"/>
<dbReference type="CTD" id="22921"/>
<dbReference type="RGD" id="1306026">
    <property type="gene designation" value="Msrb2"/>
</dbReference>
<dbReference type="eggNOG" id="KOG0856">
    <property type="taxonomic scope" value="Eukaryota"/>
</dbReference>
<dbReference type="GeneTree" id="ENSGT00940000161673"/>
<dbReference type="HOGENOM" id="CLU_031040_8_2_1"/>
<dbReference type="InParanoid" id="Q4FZX5"/>
<dbReference type="OMA" id="YDETTDW"/>
<dbReference type="OrthoDB" id="12542at9989"/>
<dbReference type="PhylomeDB" id="Q4FZX5"/>
<dbReference type="TreeFam" id="TF329147"/>
<dbReference type="Reactome" id="R-RNO-5676934">
    <property type="pathway name" value="Protein repair"/>
</dbReference>
<dbReference type="PRO" id="PR:Q4FZX5"/>
<dbReference type="Proteomes" id="UP000002494">
    <property type="component" value="Chromosome 17"/>
</dbReference>
<dbReference type="Bgee" id="ENSRNOG00000016873">
    <property type="expression patterns" value="Expressed in kidney and 20 other cell types or tissues"/>
</dbReference>
<dbReference type="GO" id="GO:0005737">
    <property type="term" value="C:cytoplasm"/>
    <property type="evidence" value="ECO:0000318"/>
    <property type="project" value="GO_Central"/>
</dbReference>
<dbReference type="GO" id="GO:0005739">
    <property type="term" value="C:mitochondrion"/>
    <property type="evidence" value="ECO:0000266"/>
    <property type="project" value="RGD"/>
</dbReference>
<dbReference type="GO" id="GO:0003779">
    <property type="term" value="F:actin binding"/>
    <property type="evidence" value="ECO:0000250"/>
    <property type="project" value="UniProtKB"/>
</dbReference>
<dbReference type="GO" id="GO:0033745">
    <property type="term" value="F:L-methionine-(R)-S-oxide reductase activity"/>
    <property type="evidence" value="ECO:0007669"/>
    <property type="project" value="UniProtKB-EC"/>
</dbReference>
<dbReference type="GO" id="GO:0033743">
    <property type="term" value="F:peptide-methionine (R)-S-oxide reductase activity"/>
    <property type="evidence" value="ECO:0000250"/>
    <property type="project" value="UniProtKB"/>
</dbReference>
<dbReference type="GO" id="GO:0008270">
    <property type="term" value="F:zinc ion binding"/>
    <property type="evidence" value="ECO:0000266"/>
    <property type="project" value="RGD"/>
</dbReference>
<dbReference type="GO" id="GO:0030041">
    <property type="term" value="P:actin filament polymerization"/>
    <property type="evidence" value="ECO:0000250"/>
    <property type="project" value="UniProtKB"/>
</dbReference>
<dbReference type="GO" id="GO:0030091">
    <property type="term" value="P:protein repair"/>
    <property type="evidence" value="ECO:0000266"/>
    <property type="project" value="RGD"/>
</dbReference>
<dbReference type="GO" id="GO:0006979">
    <property type="term" value="P:response to oxidative stress"/>
    <property type="evidence" value="ECO:0007669"/>
    <property type="project" value="InterPro"/>
</dbReference>
<dbReference type="FunFam" id="2.170.150.20:FF:000006">
    <property type="entry name" value="Peptide-methionine (R)-S-oxide reductase"/>
    <property type="match status" value="1"/>
</dbReference>
<dbReference type="Gene3D" id="2.170.150.20">
    <property type="entry name" value="Peptide methionine sulfoxide reductase"/>
    <property type="match status" value="1"/>
</dbReference>
<dbReference type="InterPro" id="IPR028427">
    <property type="entry name" value="Met_Sox_Rdtase_MsrB"/>
</dbReference>
<dbReference type="InterPro" id="IPR002579">
    <property type="entry name" value="Met_Sox_Rdtase_MsrB_dom"/>
</dbReference>
<dbReference type="InterPro" id="IPR011057">
    <property type="entry name" value="Mss4-like_sf"/>
</dbReference>
<dbReference type="NCBIfam" id="TIGR00357">
    <property type="entry name" value="peptide-methionine (R)-S-oxide reductase MsrB"/>
    <property type="match status" value="1"/>
</dbReference>
<dbReference type="PANTHER" id="PTHR10173">
    <property type="entry name" value="METHIONINE SULFOXIDE REDUCTASE"/>
    <property type="match status" value="1"/>
</dbReference>
<dbReference type="PANTHER" id="PTHR10173:SF37">
    <property type="entry name" value="METHIONINE-R-SULFOXIDE REDUCTASE B2, MITOCHONDRIAL"/>
    <property type="match status" value="1"/>
</dbReference>
<dbReference type="Pfam" id="PF01641">
    <property type="entry name" value="SelR"/>
    <property type="match status" value="1"/>
</dbReference>
<dbReference type="SUPFAM" id="SSF51316">
    <property type="entry name" value="Mss4-like"/>
    <property type="match status" value="1"/>
</dbReference>
<dbReference type="PROSITE" id="PS51790">
    <property type="entry name" value="MSRB"/>
    <property type="match status" value="1"/>
</dbReference>
<organism>
    <name type="scientific">Rattus norvegicus</name>
    <name type="common">Rat</name>
    <dbReference type="NCBI Taxonomy" id="10116"/>
    <lineage>
        <taxon>Eukaryota</taxon>
        <taxon>Metazoa</taxon>
        <taxon>Chordata</taxon>
        <taxon>Craniata</taxon>
        <taxon>Vertebrata</taxon>
        <taxon>Euteleostomi</taxon>
        <taxon>Mammalia</taxon>
        <taxon>Eutheria</taxon>
        <taxon>Euarchontoglires</taxon>
        <taxon>Glires</taxon>
        <taxon>Rodentia</taxon>
        <taxon>Myomorpha</taxon>
        <taxon>Muroidea</taxon>
        <taxon>Muridae</taxon>
        <taxon>Murinae</taxon>
        <taxon>Rattus</taxon>
    </lineage>
</organism>
<keyword id="KW-0479">Metal-binding</keyword>
<keyword id="KW-0496">Mitochondrion</keyword>
<keyword id="KW-0560">Oxidoreductase</keyword>
<keyword id="KW-1185">Reference proteome</keyword>
<keyword id="KW-0809">Transit peptide</keyword>
<keyword id="KW-0862">Zinc</keyword>
<comment type="function">
    <text evidence="3">Methionine-sulfoxide reductase that specifically reduces methionine (R)-sulfoxide back to methionine. While in many cases, methionine oxidation is the result of random oxidation following oxidative stress, methionine oxidation is also a post-translational modification that takes place on specific residue. Upon oxidative stress, may play a role in the preservation of mitochondrial integrity by decreasing the intracellular reactive oxygen species build-up through its scavenging role, hence contributing to cell survival and protein maintenance.</text>
</comment>
<comment type="catalytic activity">
    <reaction evidence="2">
        <text>L-methionyl-[protein] + [thioredoxin]-disulfide + H2O = L-methionyl-(R)-S-oxide-[protein] + [thioredoxin]-dithiol</text>
        <dbReference type="Rhea" id="RHEA:24164"/>
        <dbReference type="Rhea" id="RHEA-COMP:10698"/>
        <dbReference type="Rhea" id="RHEA-COMP:10700"/>
        <dbReference type="Rhea" id="RHEA-COMP:12313"/>
        <dbReference type="Rhea" id="RHEA-COMP:12314"/>
        <dbReference type="ChEBI" id="CHEBI:15377"/>
        <dbReference type="ChEBI" id="CHEBI:16044"/>
        <dbReference type="ChEBI" id="CHEBI:29950"/>
        <dbReference type="ChEBI" id="CHEBI:45764"/>
        <dbReference type="ChEBI" id="CHEBI:50058"/>
        <dbReference type="EC" id="1.8.4.12"/>
    </reaction>
</comment>
<comment type="catalytic activity">
    <reaction evidence="2">
        <text>[thioredoxin]-disulfide + L-methionine + H2O = L-methionine (R)-S-oxide + [thioredoxin]-dithiol</text>
        <dbReference type="Rhea" id="RHEA:21260"/>
        <dbReference type="Rhea" id="RHEA-COMP:10698"/>
        <dbReference type="Rhea" id="RHEA-COMP:10700"/>
        <dbReference type="ChEBI" id="CHEBI:15377"/>
        <dbReference type="ChEBI" id="CHEBI:29950"/>
        <dbReference type="ChEBI" id="CHEBI:50058"/>
        <dbReference type="ChEBI" id="CHEBI:57844"/>
        <dbReference type="ChEBI" id="CHEBI:58773"/>
        <dbReference type="EC" id="1.8.4.14"/>
    </reaction>
</comment>
<comment type="cofactor">
    <cofactor evidence="1">
        <name>Zn(2+)</name>
        <dbReference type="ChEBI" id="CHEBI:29105"/>
    </cofactor>
    <text evidence="1">Binds 1 zinc ion per subunit.</text>
</comment>
<comment type="subcellular location">
    <subcellularLocation>
        <location evidence="1">Mitochondrion</location>
    </subcellularLocation>
</comment>
<comment type="similarity">
    <text evidence="6">Belongs to the MsrB Met sulfoxide reductase family.</text>
</comment>
<name>MSRB2_RAT</name>